<organism>
    <name type="scientific">Sulfolobus acidocaldarius (strain ATCC 33909 / DSM 639 / JCM 8929 / NBRC 15157 / NCIMB 11770)</name>
    <dbReference type="NCBI Taxonomy" id="330779"/>
    <lineage>
        <taxon>Archaea</taxon>
        <taxon>Thermoproteota</taxon>
        <taxon>Thermoprotei</taxon>
        <taxon>Sulfolobales</taxon>
        <taxon>Sulfolobaceae</taxon>
        <taxon>Sulfolobus</taxon>
    </lineage>
</organism>
<gene>
    <name evidence="1" type="primary">aroB</name>
    <name type="ordered locus">Saci_0184</name>
</gene>
<evidence type="ECO:0000255" key="1">
    <source>
        <dbReference type="HAMAP-Rule" id="MF_00110"/>
    </source>
</evidence>
<reference key="1">
    <citation type="journal article" date="2005" name="J. Bacteriol.">
        <title>The genome of Sulfolobus acidocaldarius, a model organism of the Crenarchaeota.</title>
        <authorList>
            <person name="Chen L."/>
            <person name="Bruegger K."/>
            <person name="Skovgaard M."/>
            <person name="Redder P."/>
            <person name="She Q."/>
            <person name="Torarinsson E."/>
            <person name="Greve B."/>
            <person name="Awayez M."/>
            <person name="Zibat A."/>
            <person name="Klenk H.-P."/>
            <person name="Garrett R.A."/>
        </authorList>
    </citation>
    <scope>NUCLEOTIDE SEQUENCE [LARGE SCALE GENOMIC DNA]</scope>
    <source>
        <strain>ATCC 33909 / DSM 639 / JCM 8929 / NBRC 15157 / NCIMB 11770</strain>
    </source>
</reference>
<feature type="chain" id="PRO_0000140821" description="3-dehydroquinate synthase">
    <location>
        <begin position="1"/>
        <end position="353"/>
    </location>
</feature>
<feature type="binding site" evidence="1">
    <location>
        <begin position="61"/>
        <end position="66"/>
    </location>
    <ligand>
        <name>NAD(+)</name>
        <dbReference type="ChEBI" id="CHEBI:57540"/>
    </ligand>
</feature>
<feature type="binding site" evidence="1">
    <location>
        <begin position="119"/>
        <end position="120"/>
    </location>
    <ligand>
        <name>NAD(+)</name>
        <dbReference type="ChEBI" id="CHEBI:57540"/>
    </ligand>
</feature>
<feature type="binding site" evidence="1">
    <location>
        <position position="132"/>
    </location>
    <ligand>
        <name>NAD(+)</name>
        <dbReference type="ChEBI" id="CHEBI:57540"/>
    </ligand>
</feature>
<feature type="binding site" evidence="1">
    <location>
        <position position="141"/>
    </location>
    <ligand>
        <name>NAD(+)</name>
        <dbReference type="ChEBI" id="CHEBI:57540"/>
    </ligand>
</feature>
<feature type="binding site" evidence="1">
    <location>
        <position position="174"/>
    </location>
    <ligand>
        <name>Zn(2+)</name>
        <dbReference type="ChEBI" id="CHEBI:29105"/>
    </ligand>
</feature>
<feature type="binding site" evidence="1">
    <location>
        <position position="238"/>
    </location>
    <ligand>
        <name>Zn(2+)</name>
        <dbReference type="ChEBI" id="CHEBI:29105"/>
    </ligand>
</feature>
<feature type="binding site" evidence="1">
    <location>
        <position position="254"/>
    </location>
    <ligand>
        <name>Zn(2+)</name>
        <dbReference type="ChEBI" id="CHEBI:29105"/>
    </ligand>
</feature>
<dbReference type="EC" id="4.2.3.4" evidence="1"/>
<dbReference type="EMBL" id="CP000077">
    <property type="protein sequence ID" value="AAY79603.1"/>
    <property type="molecule type" value="Genomic_DNA"/>
</dbReference>
<dbReference type="RefSeq" id="WP_011277104.1">
    <property type="nucleotide sequence ID" value="NC_007181.1"/>
</dbReference>
<dbReference type="SMR" id="Q4JC76"/>
<dbReference type="STRING" id="330779.Saci_0184"/>
<dbReference type="GeneID" id="14550712"/>
<dbReference type="GeneID" id="3473922"/>
<dbReference type="KEGG" id="sai:Saci_0184"/>
<dbReference type="PATRIC" id="fig|330779.12.peg.176"/>
<dbReference type="eggNOG" id="arCOG00983">
    <property type="taxonomic scope" value="Archaea"/>
</dbReference>
<dbReference type="HOGENOM" id="CLU_001201_0_1_2"/>
<dbReference type="UniPathway" id="UPA00053">
    <property type="reaction ID" value="UER00085"/>
</dbReference>
<dbReference type="Proteomes" id="UP000001018">
    <property type="component" value="Chromosome"/>
</dbReference>
<dbReference type="GO" id="GO:0005737">
    <property type="term" value="C:cytoplasm"/>
    <property type="evidence" value="ECO:0007669"/>
    <property type="project" value="UniProtKB-SubCell"/>
</dbReference>
<dbReference type="GO" id="GO:0003856">
    <property type="term" value="F:3-dehydroquinate synthase activity"/>
    <property type="evidence" value="ECO:0007669"/>
    <property type="project" value="UniProtKB-UniRule"/>
</dbReference>
<dbReference type="GO" id="GO:0046872">
    <property type="term" value="F:metal ion binding"/>
    <property type="evidence" value="ECO:0007669"/>
    <property type="project" value="UniProtKB-KW"/>
</dbReference>
<dbReference type="GO" id="GO:0000166">
    <property type="term" value="F:nucleotide binding"/>
    <property type="evidence" value="ECO:0007669"/>
    <property type="project" value="UniProtKB-KW"/>
</dbReference>
<dbReference type="GO" id="GO:0008652">
    <property type="term" value="P:amino acid biosynthetic process"/>
    <property type="evidence" value="ECO:0007669"/>
    <property type="project" value="UniProtKB-KW"/>
</dbReference>
<dbReference type="GO" id="GO:0009073">
    <property type="term" value="P:aromatic amino acid family biosynthetic process"/>
    <property type="evidence" value="ECO:0007669"/>
    <property type="project" value="UniProtKB-KW"/>
</dbReference>
<dbReference type="GO" id="GO:0009423">
    <property type="term" value="P:chorismate biosynthetic process"/>
    <property type="evidence" value="ECO:0007669"/>
    <property type="project" value="UniProtKB-UniRule"/>
</dbReference>
<dbReference type="CDD" id="cd08195">
    <property type="entry name" value="DHQS"/>
    <property type="match status" value="1"/>
</dbReference>
<dbReference type="Gene3D" id="3.40.50.1970">
    <property type="match status" value="1"/>
</dbReference>
<dbReference type="Gene3D" id="1.20.1090.10">
    <property type="entry name" value="Dehydroquinate synthase-like - alpha domain"/>
    <property type="match status" value="1"/>
</dbReference>
<dbReference type="HAMAP" id="MF_00110">
    <property type="entry name" value="DHQ_synthase"/>
    <property type="match status" value="1"/>
</dbReference>
<dbReference type="InterPro" id="IPR050071">
    <property type="entry name" value="Dehydroquinate_synthase"/>
</dbReference>
<dbReference type="InterPro" id="IPR016037">
    <property type="entry name" value="DHQ_synth_AroB"/>
</dbReference>
<dbReference type="InterPro" id="IPR030963">
    <property type="entry name" value="DHQ_synth_fam"/>
</dbReference>
<dbReference type="InterPro" id="IPR030960">
    <property type="entry name" value="DHQS/DOIS_N"/>
</dbReference>
<dbReference type="InterPro" id="IPR056179">
    <property type="entry name" value="DHQS_C"/>
</dbReference>
<dbReference type="NCBIfam" id="TIGR01357">
    <property type="entry name" value="aroB"/>
    <property type="match status" value="1"/>
</dbReference>
<dbReference type="PANTHER" id="PTHR43622">
    <property type="entry name" value="3-DEHYDROQUINATE SYNTHASE"/>
    <property type="match status" value="1"/>
</dbReference>
<dbReference type="PANTHER" id="PTHR43622:SF1">
    <property type="entry name" value="3-DEHYDROQUINATE SYNTHASE"/>
    <property type="match status" value="1"/>
</dbReference>
<dbReference type="Pfam" id="PF01761">
    <property type="entry name" value="DHQ_synthase"/>
    <property type="match status" value="1"/>
</dbReference>
<dbReference type="Pfam" id="PF24621">
    <property type="entry name" value="DHQS_C"/>
    <property type="match status" value="1"/>
</dbReference>
<dbReference type="PIRSF" id="PIRSF001455">
    <property type="entry name" value="DHQ_synth"/>
    <property type="match status" value="1"/>
</dbReference>
<dbReference type="SUPFAM" id="SSF56796">
    <property type="entry name" value="Dehydroquinate synthase-like"/>
    <property type="match status" value="1"/>
</dbReference>
<accession>Q4JC76</accession>
<name>AROB_SULAC</name>
<proteinExistence type="inferred from homology"/>
<comment type="function">
    <text evidence="1">Catalyzes the conversion of 3-deoxy-D-arabino-heptulosonate 7-phosphate (DAHP) to dehydroquinate (DHQ).</text>
</comment>
<comment type="catalytic activity">
    <reaction evidence="1">
        <text>7-phospho-2-dehydro-3-deoxy-D-arabino-heptonate = 3-dehydroquinate + phosphate</text>
        <dbReference type="Rhea" id="RHEA:21968"/>
        <dbReference type="ChEBI" id="CHEBI:32364"/>
        <dbReference type="ChEBI" id="CHEBI:43474"/>
        <dbReference type="ChEBI" id="CHEBI:58394"/>
        <dbReference type="EC" id="4.2.3.4"/>
    </reaction>
</comment>
<comment type="cofactor">
    <cofactor evidence="1">
        <name>Co(2+)</name>
        <dbReference type="ChEBI" id="CHEBI:48828"/>
    </cofactor>
    <cofactor evidence="1">
        <name>Zn(2+)</name>
        <dbReference type="ChEBI" id="CHEBI:29105"/>
    </cofactor>
    <text evidence="1">Binds 1 divalent metal cation per subunit. Can use either Co(2+) or Zn(2+).</text>
</comment>
<comment type="cofactor">
    <cofactor evidence="1">
        <name>NAD(+)</name>
        <dbReference type="ChEBI" id="CHEBI:57540"/>
    </cofactor>
</comment>
<comment type="pathway">
    <text evidence="1">Metabolic intermediate biosynthesis; chorismate biosynthesis; chorismate from D-erythrose 4-phosphate and phosphoenolpyruvate: step 2/7.</text>
</comment>
<comment type="subcellular location">
    <subcellularLocation>
        <location evidence="1">Cytoplasm</location>
    </subcellularLocation>
</comment>
<comment type="similarity">
    <text evidence="1">Belongs to the sugar phosphate cyclases superfamily. Dehydroquinate synthase family.</text>
</comment>
<protein>
    <recommendedName>
        <fullName evidence="1">3-dehydroquinate synthase</fullName>
        <shortName evidence="1">DHQS</shortName>
        <ecNumber evidence="1">4.2.3.4</ecNumber>
    </recommendedName>
</protein>
<sequence length="353" mass="39092">MIRFSESITSQQDIDVVVGENALSYLREIQNKKAIFYSSSVNIDFIKPHLEGEYTLVPIKDGEEAKDIQYSLELLKVLFDGGFDRGDYVIAIGGGSVTDTVGFIASTYMRGLNLINVPTTLLGMVDAGIGGKNGVNFGRIKNIIGTFYQPRAIIADLRFLISLPSEEVRKGLAEVIKYGLVLDKELYDFLALNKNSVLSKDPESLEYVVQRSIQDKLSVVKEDERETKGVRIVLNFGHTIGHAIEAGSGFSIPHGYAISVGMVCEAKIAEEMGYSEEGVVEDTVWILSHYNLPISIDELSSKIDLKEALFALSKDKKVRNGVLLMPFPTRIGDWKRVEVPIETLKGFAEQCLK</sequence>
<keyword id="KW-0028">Amino-acid biosynthesis</keyword>
<keyword id="KW-0057">Aromatic amino acid biosynthesis</keyword>
<keyword id="KW-0170">Cobalt</keyword>
<keyword id="KW-0963">Cytoplasm</keyword>
<keyword id="KW-0456">Lyase</keyword>
<keyword id="KW-0479">Metal-binding</keyword>
<keyword id="KW-0520">NAD</keyword>
<keyword id="KW-0547">Nucleotide-binding</keyword>
<keyword id="KW-1185">Reference proteome</keyword>
<keyword id="KW-0862">Zinc</keyword>